<reference key="1">
    <citation type="journal article" date="1995" name="Science">
        <title>The minimal gene complement of Mycoplasma genitalium.</title>
        <authorList>
            <person name="Fraser C.M."/>
            <person name="Gocayne J.D."/>
            <person name="White O."/>
            <person name="Adams M.D."/>
            <person name="Clayton R.A."/>
            <person name="Fleischmann R.D."/>
            <person name="Bult C.J."/>
            <person name="Kerlavage A.R."/>
            <person name="Sutton G.G."/>
            <person name="Kelley J.M."/>
            <person name="Fritchman J.L."/>
            <person name="Weidman J.F."/>
            <person name="Small K.V."/>
            <person name="Sandusky M."/>
            <person name="Fuhrmann J.L."/>
            <person name="Nguyen D.T."/>
            <person name="Utterback T.R."/>
            <person name="Saudek D.M."/>
            <person name="Phillips C.A."/>
            <person name="Merrick J.M."/>
            <person name="Tomb J.-F."/>
            <person name="Dougherty B.A."/>
            <person name="Bott K.F."/>
            <person name="Hu P.-C."/>
            <person name="Lucier T.S."/>
            <person name="Peterson S.N."/>
            <person name="Smith H.O."/>
            <person name="Hutchison C.A. III"/>
            <person name="Venter J.C."/>
        </authorList>
    </citation>
    <scope>NUCLEOTIDE SEQUENCE [LARGE SCALE GENOMIC DNA]</scope>
    <source>
        <strain>ATCC 33530 / DSM 19775 / NCTC 10195 / G37</strain>
    </source>
</reference>
<reference key="2">
    <citation type="journal article" date="1993" name="J. Bacteriol.">
        <title>A survey of the Mycoplasma genitalium genome by using random sequencing.</title>
        <authorList>
            <person name="Peterson S.N."/>
            <person name="Hu P.-C."/>
            <person name="Bott K.F."/>
            <person name="Hutchison C.A. III"/>
        </authorList>
    </citation>
    <scope>NUCLEOTIDE SEQUENCE [GENOMIC DNA] OF 307-415</scope>
    <source>
        <strain>ATCC 33530 / DSM 19775 / NCTC 10195 / G37</strain>
    </source>
</reference>
<gene>
    <name type="ordered locus">MG068</name>
</gene>
<sequence>MLRRYLTLSFSSLLLLALLFLTGCSFVRPQFRRGFRTQFKINSIPTVSDPYHINYDLTFSLNFASNKRNTYGTGWLIDWKGDENNPEKNDPFKVYLATNLHVIDALRNNNDYEPYNKDSNNQAFNSEEITRFFSIGKYTYPSIFSELNFIINAREAFVSIQTSTIPKTAYAAVNFVETQGEDESYTDSLSTDNKRDIYADFAVIEIPLFLTNHRDYQVFNEFIKPAIETYKQLGNSSFEKKQLDQHKNDNFYMLGYPLVESSIDALILNQRRQYNNSYTEKYTPQTLTKDQRTIDLSREVPTLIQNKTENSTGSQLLVNQSLSSTSEGIIEFIKLPEFKLNYHNKSYRQYGRGFALQNTNFRPGSSGTLMLNNQKQIAGIYFGVLDFGEDVSLMSNIGVGQILRVPQKNNTRNRSIATNKSNYDLIFGDSNTTNFYAKFARQNNTHLYQMISNSKDTKLKYVNTVEKTVKASIK</sequence>
<evidence type="ECO:0000255" key="1">
    <source>
        <dbReference type="PROSITE-ProRule" id="PRU00303"/>
    </source>
</evidence>
<evidence type="ECO:0000305" key="2"/>
<proteinExistence type="inferred from homology"/>
<organism>
    <name type="scientific">Mycoplasma genitalium (strain ATCC 33530 / DSM 19775 / NCTC 10195 / G37)</name>
    <name type="common">Mycoplasmoides genitalium</name>
    <dbReference type="NCBI Taxonomy" id="243273"/>
    <lineage>
        <taxon>Bacteria</taxon>
        <taxon>Bacillati</taxon>
        <taxon>Mycoplasmatota</taxon>
        <taxon>Mycoplasmoidales</taxon>
        <taxon>Mycoplasmoidaceae</taxon>
        <taxon>Mycoplasmoides</taxon>
    </lineage>
</organism>
<comment type="subcellular location">
    <subcellularLocation>
        <location evidence="1">Cell membrane</location>
        <topology evidence="1">Lipid-anchor</topology>
    </subcellularLocation>
</comment>
<comment type="similarity">
    <text evidence="2">Belongs to the MG067/MG068/MG395 family.</text>
</comment>
<name>Y068_MYCGE</name>
<dbReference type="EMBL" id="L43967">
    <property type="protein sequence ID" value="AAC71286.1"/>
    <property type="molecule type" value="Genomic_DNA"/>
</dbReference>
<dbReference type="EMBL" id="U02162">
    <property type="protein sequence ID" value="AAD12444.1"/>
    <property type="molecule type" value="Genomic_DNA"/>
</dbReference>
<dbReference type="PIR" id="E64207">
    <property type="entry name" value="E64207"/>
</dbReference>
<dbReference type="RefSeq" id="WP_009885731.1">
    <property type="nucleotide sequence ID" value="NC_000908.2"/>
</dbReference>
<dbReference type="STRING" id="243273.MG_068"/>
<dbReference type="GeneID" id="88282187"/>
<dbReference type="KEGG" id="mge:MG_068"/>
<dbReference type="eggNOG" id="ENOG5030MXD">
    <property type="taxonomic scope" value="Bacteria"/>
</dbReference>
<dbReference type="HOGENOM" id="CLU_038569_1_0_14"/>
<dbReference type="InParanoid" id="P47314"/>
<dbReference type="OrthoDB" id="395427at2"/>
<dbReference type="BioCyc" id="MGEN243273:G1GJ2-73-MONOMER"/>
<dbReference type="Proteomes" id="UP000000807">
    <property type="component" value="Chromosome"/>
</dbReference>
<dbReference type="GO" id="GO:0005886">
    <property type="term" value="C:plasma membrane"/>
    <property type="evidence" value="ECO:0007669"/>
    <property type="project" value="UniProtKB-SubCell"/>
</dbReference>
<dbReference type="InterPro" id="IPR022382">
    <property type="entry name" value="Mycoplasma_peptidase_DUF31"/>
</dbReference>
<dbReference type="InterPro" id="IPR009003">
    <property type="entry name" value="Peptidase_S1_PA"/>
</dbReference>
<dbReference type="InterPro" id="IPR022381">
    <property type="entry name" value="Uncharacterised_MG067"/>
</dbReference>
<dbReference type="Pfam" id="PF01732">
    <property type="entry name" value="Mycop_pep_DUF31"/>
    <property type="match status" value="1"/>
</dbReference>
<dbReference type="PRINTS" id="PR00840">
    <property type="entry name" value="Y06768FAMILY"/>
</dbReference>
<dbReference type="SUPFAM" id="SSF50494">
    <property type="entry name" value="Trypsin-like serine proteases"/>
    <property type="match status" value="1"/>
</dbReference>
<dbReference type="PROSITE" id="PS51257">
    <property type="entry name" value="PROKAR_LIPOPROTEIN"/>
    <property type="match status" value="1"/>
</dbReference>
<feature type="signal peptide" evidence="1">
    <location>
        <begin position="1"/>
        <end position="23"/>
    </location>
</feature>
<feature type="chain" id="PRO_0000018736" description="Uncharacterized lipoprotein MG068">
    <location>
        <begin position="24"/>
        <end position="474"/>
    </location>
</feature>
<feature type="lipid moiety-binding region" description="N-palmitoyl cysteine" evidence="1">
    <location>
        <position position="24"/>
    </location>
</feature>
<feature type="lipid moiety-binding region" description="S-diacylglycerol cysteine" evidence="1">
    <location>
        <position position="24"/>
    </location>
</feature>
<accession>P47314</accession>
<protein>
    <recommendedName>
        <fullName>Uncharacterized lipoprotein MG068</fullName>
    </recommendedName>
</protein>
<keyword id="KW-1003">Cell membrane</keyword>
<keyword id="KW-0449">Lipoprotein</keyword>
<keyword id="KW-0472">Membrane</keyword>
<keyword id="KW-0564">Palmitate</keyword>
<keyword id="KW-1185">Reference proteome</keyword>
<keyword id="KW-0732">Signal</keyword>